<gene>
    <name evidence="1" type="primary">dadA</name>
    <name type="ordered locus">PHZ_c0060</name>
</gene>
<protein>
    <recommendedName>
        <fullName evidence="1">D-amino acid dehydrogenase</fullName>
        <ecNumber evidence="1">1.4.99.-</ecNumber>
    </recommendedName>
</protein>
<organism>
    <name type="scientific">Phenylobacterium zucineum (strain HLK1)</name>
    <dbReference type="NCBI Taxonomy" id="450851"/>
    <lineage>
        <taxon>Bacteria</taxon>
        <taxon>Pseudomonadati</taxon>
        <taxon>Pseudomonadota</taxon>
        <taxon>Alphaproteobacteria</taxon>
        <taxon>Caulobacterales</taxon>
        <taxon>Caulobacteraceae</taxon>
        <taxon>Phenylobacterium</taxon>
    </lineage>
</organism>
<feature type="chain" id="PRO_1000138660" description="D-amino acid dehydrogenase">
    <location>
        <begin position="1"/>
        <end position="426"/>
    </location>
</feature>
<feature type="binding site" evidence="1">
    <location>
        <begin position="3"/>
        <end position="17"/>
    </location>
    <ligand>
        <name>FAD</name>
        <dbReference type="ChEBI" id="CHEBI:57692"/>
    </ligand>
</feature>
<name>DADA_PHEZH</name>
<proteinExistence type="inferred from homology"/>
<keyword id="KW-0274">FAD</keyword>
<keyword id="KW-0285">Flavoprotein</keyword>
<keyword id="KW-0560">Oxidoreductase</keyword>
<keyword id="KW-1185">Reference proteome</keyword>
<dbReference type="EC" id="1.4.99.-" evidence="1"/>
<dbReference type="EMBL" id="CP000747">
    <property type="protein sequence ID" value="ACG76474.1"/>
    <property type="molecule type" value="Genomic_DNA"/>
</dbReference>
<dbReference type="RefSeq" id="WP_012520622.1">
    <property type="nucleotide sequence ID" value="NC_011144.1"/>
</dbReference>
<dbReference type="SMR" id="B4RBL4"/>
<dbReference type="STRING" id="450851.PHZ_c0060"/>
<dbReference type="KEGG" id="pzu:PHZ_c0060"/>
<dbReference type="eggNOG" id="COG0665">
    <property type="taxonomic scope" value="Bacteria"/>
</dbReference>
<dbReference type="HOGENOM" id="CLU_007884_9_2_5"/>
<dbReference type="OrthoDB" id="9805337at2"/>
<dbReference type="UniPathway" id="UPA00043">
    <property type="reaction ID" value="UER00498"/>
</dbReference>
<dbReference type="Proteomes" id="UP000001868">
    <property type="component" value="Chromosome"/>
</dbReference>
<dbReference type="GO" id="GO:0005737">
    <property type="term" value="C:cytoplasm"/>
    <property type="evidence" value="ECO:0007669"/>
    <property type="project" value="TreeGrafter"/>
</dbReference>
<dbReference type="GO" id="GO:0005886">
    <property type="term" value="C:plasma membrane"/>
    <property type="evidence" value="ECO:0007669"/>
    <property type="project" value="TreeGrafter"/>
</dbReference>
<dbReference type="GO" id="GO:0008718">
    <property type="term" value="F:D-amino-acid dehydrogenase activity"/>
    <property type="evidence" value="ECO:0007669"/>
    <property type="project" value="UniProtKB-UniRule"/>
</dbReference>
<dbReference type="GO" id="GO:0055130">
    <property type="term" value="P:D-alanine catabolic process"/>
    <property type="evidence" value="ECO:0007669"/>
    <property type="project" value="UniProtKB-UniPathway"/>
</dbReference>
<dbReference type="FunFam" id="3.50.50.60:FF:000020">
    <property type="entry name" value="D-amino acid dehydrogenase"/>
    <property type="match status" value="1"/>
</dbReference>
<dbReference type="Gene3D" id="3.30.9.10">
    <property type="entry name" value="D-Amino Acid Oxidase, subunit A, domain 2"/>
    <property type="match status" value="1"/>
</dbReference>
<dbReference type="Gene3D" id="3.50.50.60">
    <property type="entry name" value="FAD/NAD(P)-binding domain"/>
    <property type="match status" value="2"/>
</dbReference>
<dbReference type="HAMAP" id="MF_01202">
    <property type="entry name" value="DadA"/>
    <property type="match status" value="1"/>
</dbReference>
<dbReference type="InterPro" id="IPR023080">
    <property type="entry name" value="DadA"/>
</dbReference>
<dbReference type="InterPro" id="IPR006076">
    <property type="entry name" value="FAD-dep_OxRdtase"/>
</dbReference>
<dbReference type="InterPro" id="IPR036188">
    <property type="entry name" value="FAD/NAD-bd_sf"/>
</dbReference>
<dbReference type="NCBIfam" id="NF001933">
    <property type="entry name" value="PRK00711.1"/>
    <property type="match status" value="1"/>
</dbReference>
<dbReference type="PANTHER" id="PTHR13847:SF280">
    <property type="entry name" value="D-AMINO ACID DEHYDROGENASE"/>
    <property type="match status" value="1"/>
</dbReference>
<dbReference type="PANTHER" id="PTHR13847">
    <property type="entry name" value="SARCOSINE DEHYDROGENASE-RELATED"/>
    <property type="match status" value="1"/>
</dbReference>
<dbReference type="Pfam" id="PF01266">
    <property type="entry name" value="DAO"/>
    <property type="match status" value="1"/>
</dbReference>
<dbReference type="SUPFAM" id="SSF54373">
    <property type="entry name" value="FAD-linked reductases, C-terminal domain"/>
    <property type="match status" value="1"/>
</dbReference>
<dbReference type="SUPFAM" id="SSF51905">
    <property type="entry name" value="FAD/NAD(P)-binding domain"/>
    <property type="match status" value="1"/>
</dbReference>
<reference key="1">
    <citation type="journal article" date="2008" name="BMC Genomics">
        <title>Complete genome of Phenylobacterium zucineum - a novel facultative intracellular bacterium isolated from human erythroleukemia cell line K562.</title>
        <authorList>
            <person name="Luo Y."/>
            <person name="Xu X."/>
            <person name="Ding Z."/>
            <person name="Liu Z."/>
            <person name="Zhang B."/>
            <person name="Yan Z."/>
            <person name="Sun J."/>
            <person name="Hu S."/>
            <person name="Hu X."/>
        </authorList>
    </citation>
    <scope>NUCLEOTIDE SEQUENCE [LARGE SCALE GENOMIC DNA]</scope>
    <source>
        <strain>HLK1</strain>
    </source>
</reference>
<evidence type="ECO:0000255" key="1">
    <source>
        <dbReference type="HAMAP-Rule" id="MF_01202"/>
    </source>
</evidence>
<sequence length="426" mass="45586">MKVVVLGAGVIGVTTAWYLAKAGHEVVVLERQDGAALETSFANAGEISPGYASPWASPGVPRKAPKWLLARHAPLIVRPSLDPALLSWLLAMLRNCTTERYLANKARMVRLAEHSRDCLIALRRETGIQYDQRSRGTLQVFRTQAQMDEAGKDMEVLRDLGVPYELLDRLGCIAREPGLGHARDTIVGGLRLPNDETGDCFKFTTALADLCRGQGVDFRFGTTIQGLETAGGEVGGVRTPGGTVTGDAYVVCLGSYSEPFLRPHGIRTGVYPVKGYSLTATITDEAKAPVSTLLDETYKVAITRLGDRVRIGGLAELAGYDLSLRPSRRATLEHSAGSLFGGSCDLPSATFWCGLRPMTPTSTPRIGEAPLRRLFLNTGHGTLGWTMACGSAQVLADAVGRQAPALDLTDYAVPGSPAAEPLRRAA</sequence>
<comment type="function">
    <text evidence="1">Oxidative deamination of D-amino acids.</text>
</comment>
<comment type="catalytic activity">
    <reaction evidence="1">
        <text>a D-alpha-amino acid + A + H2O = a 2-oxocarboxylate + AH2 + NH4(+)</text>
        <dbReference type="Rhea" id="RHEA:18125"/>
        <dbReference type="ChEBI" id="CHEBI:13193"/>
        <dbReference type="ChEBI" id="CHEBI:15377"/>
        <dbReference type="ChEBI" id="CHEBI:17499"/>
        <dbReference type="ChEBI" id="CHEBI:28938"/>
        <dbReference type="ChEBI" id="CHEBI:35179"/>
        <dbReference type="ChEBI" id="CHEBI:59871"/>
    </reaction>
</comment>
<comment type="cofactor">
    <cofactor evidence="1">
        <name>FAD</name>
        <dbReference type="ChEBI" id="CHEBI:57692"/>
    </cofactor>
</comment>
<comment type="pathway">
    <text>Amino-acid degradation; D-alanine degradation; NH(3) and pyruvate from D-alanine: step 1/1.</text>
</comment>
<comment type="similarity">
    <text evidence="1">Belongs to the DadA oxidoreductase family.</text>
</comment>
<accession>B4RBL4</accession>